<reference key="1">
    <citation type="journal article" date="2006" name="Proc. Natl. Acad. Sci. U.S.A.">
        <title>Genome sequence of Synechococcus CC9311: insights into adaptation to a coastal environment.</title>
        <authorList>
            <person name="Palenik B."/>
            <person name="Ren Q."/>
            <person name="Dupont C.L."/>
            <person name="Myers G.S."/>
            <person name="Heidelberg J.F."/>
            <person name="Badger J.H."/>
            <person name="Madupu R."/>
            <person name="Nelson W.C."/>
            <person name="Brinkac L.M."/>
            <person name="Dodson R.J."/>
            <person name="Durkin A.S."/>
            <person name="Daugherty S.C."/>
            <person name="Sullivan S.A."/>
            <person name="Khouri H."/>
            <person name="Mohamoud Y."/>
            <person name="Halpin R."/>
            <person name="Paulsen I.T."/>
        </authorList>
    </citation>
    <scope>NUCLEOTIDE SEQUENCE [LARGE SCALE GENOMIC DNA]</scope>
    <source>
        <strain>CC9311</strain>
    </source>
</reference>
<protein>
    <recommendedName>
        <fullName evidence="1">ATP-dependent Clp protease ATP-binding subunit ClpX</fullName>
    </recommendedName>
</protein>
<keyword id="KW-0067">ATP-binding</keyword>
<keyword id="KW-0143">Chaperone</keyword>
<keyword id="KW-0479">Metal-binding</keyword>
<keyword id="KW-0547">Nucleotide-binding</keyword>
<keyword id="KW-1185">Reference proteome</keyword>
<keyword id="KW-0862">Zinc</keyword>
<feature type="chain" id="PRO_1000024692" description="ATP-dependent Clp protease ATP-binding subunit ClpX">
    <location>
        <begin position="1"/>
        <end position="451"/>
    </location>
</feature>
<feature type="domain" description="ClpX-type ZB" evidence="2">
    <location>
        <begin position="1"/>
        <end position="51"/>
    </location>
</feature>
<feature type="region of interest" description="Disordered" evidence="3">
    <location>
        <begin position="50"/>
        <end position="79"/>
    </location>
</feature>
<feature type="binding site" evidence="2">
    <location>
        <position position="10"/>
    </location>
    <ligand>
        <name>Zn(2+)</name>
        <dbReference type="ChEBI" id="CHEBI:29105"/>
    </ligand>
</feature>
<feature type="binding site" evidence="2">
    <location>
        <position position="13"/>
    </location>
    <ligand>
        <name>Zn(2+)</name>
        <dbReference type="ChEBI" id="CHEBI:29105"/>
    </ligand>
</feature>
<feature type="binding site" evidence="2">
    <location>
        <position position="32"/>
    </location>
    <ligand>
        <name>Zn(2+)</name>
        <dbReference type="ChEBI" id="CHEBI:29105"/>
    </ligand>
</feature>
<feature type="binding site" evidence="2">
    <location>
        <position position="35"/>
    </location>
    <ligand>
        <name>Zn(2+)</name>
        <dbReference type="ChEBI" id="CHEBI:29105"/>
    </ligand>
</feature>
<feature type="binding site" evidence="1">
    <location>
        <begin position="144"/>
        <end position="151"/>
    </location>
    <ligand>
        <name>ATP</name>
        <dbReference type="ChEBI" id="CHEBI:30616"/>
    </ligand>
</feature>
<gene>
    <name evidence="1" type="primary">clpX</name>
    <name type="ordered locus">sync_0064</name>
</gene>
<proteinExistence type="inferred from homology"/>
<accession>Q0IE20</accession>
<organism>
    <name type="scientific">Synechococcus sp. (strain CC9311)</name>
    <dbReference type="NCBI Taxonomy" id="64471"/>
    <lineage>
        <taxon>Bacteria</taxon>
        <taxon>Bacillati</taxon>
        <taxon>Cyanobacteriota</taxon>
        <taxon>Cyanophyceae</taxon>
        <taxon>Synechococcales</taxon>
        <taxon>Synechococcaceae</taxon>
        <taxon>Synechococcus</taxon>
    </lineage>
</organism>
<evidence type="ECO:0000255" key="1">
    <source>
        <dbReference type="HAMAP-Rule" id="MF_00175"/>
    </source>
</evidence>
<evidence type="ECO:0000255" key="2">
    <source>
        <dbReference type="PROSITE-ProRule" id="PRU01250"/>
    </source>
</evidence>
<evidence type="ECO:0000256" key="3">
    <source>
        <dbReference type="SAM" id="MobiDB-lite"/>
    </source>
</evidence>
<comment type="function">
    <text evidence="1">ATP-dependent specificity component of the Clp protease. It directs the protease to specific substrates. Can perform chaperone functions in the absence of ClpP.</text>
</comment>
<comment type="subunit">
    <text evidence="1">Component of the ClpX-ClpP complex. Forms a hexameric ring that, in the presence of ATP, binds to fourteen ClpP subunits assembled into a disk-like structure with a central cavity, resembling the structure of eukaryotic proteasomes.</text>
</comment>
<comment type="similarity">
    <text evidence="1">Belongs to the ClpX chaperone family.</text>
</comment>
<dbReference type="EMBL" id="CP000435">
    <property type="protein sequence ID" value="ABI47536.1"/>
    <property type="molecule type" value="Genomic_DNA"/>
</dbReference>
<dbReference type="RefSeq" id="WP_011618053.1">
    <property type="nucleotide sequence ID" value="NC_008319.1"/>
</dbReference>
<dbReference type="SMR" id="Q0IE20"/>
<dbReference type="STRING" id="64471.sync_0064"/>
<dbReference type="KEGG" id="syg:sync_0064"/>
<dbReference type="eggNOG" id="COG1219">
    <property type="taxonomic scope" value="Bacteria"/>
</dbReference>
<dbReference type="HOGENOM" id="CLU_014218_8_2_3"/>
<dbReference type="OrthoDB" id="9804062at2"/>
<dbReference type="Proteomes" id="UP000001961">
    <property type="component" value="Chromosome"/>
</dbReference>
<dbReference type="GO" id="GO:0009376">
    <property type="term" value="C:HslUV protease complex"/>
    <property type="evidence" value="ECO:0007669"/>
    <property type="project" value="TreeGrafter"/>
</dbReference>
<dbReference type="GO" id="GO:0005524">
    <property type="term" value="F:ATP binding"/>
    <property type="evidence" value="ECO:0007669"/>
    <property type="project" value="UniProtKB-UniRule"/>
</dbReference>
<dbReference type="GO" id="GO:0016887">
    <property type="term" value="F:ATP hydrolysis activity"/>
    <property type="evidence" value="ECO:0007669"/>
    <property type="project" value="InterPro"/>
</dbReference>
<dbReference type="GO" id="GO:0140662">
    <property type="term" value="F:ATP-dependent protein folding chaperone"/>
    <property type="evidence" value="ECO:0007669"/>
    <property type="project" value="InterPro"/>
</dbReference>
<dbReference type="GO" id="GO:0046983">
    <property type="term" value="F:protein dimerization activity"/>
    <property type="evidence" value="ECO:0007669"/>
    <property type="project" value="InterPro"/>
</dbReference>
<dbReference type="GO" id="GO:0051082">
    <property type="term" value="F:unfolded protein binding"/>
    <property type="evidence" value="ECO:0007669"/>
    <property type="project" value="UniProtKB-UniRule"/>
</dbReference>
<dbReference type="GO" id="GO:0008270">
    <property type="term" value="F:zinc ion binding"/>
    <property type="evidence" value="ECO:0007669"/>
    <property type="project" value="InterPro"/>
</dbReference>
<dbReference type="GO" id="GO:0051301">
    <property type="term" value="P:cell division"/>
    <property type="evidence" value="ECO:0007669"/>
    <property type="project" value="TreeGrafter"/>
</dbReference>
<dbReference type="GO" id="GO:0051603">
    <property type="term" value="P:proteolysis involved in protein catabolic process"/>
    <property type="evidence" value="ECO:0007669"/>
    <property type="project" value="TreeGrafter"/>
</dbReference>
<dbReference type="CDD" id="cd19497">
    <property type="entry name" value="RecA-like_ClpX"/>
    <property type="match status" value="1"/>
</dbReference>
<dbReference type="FunFam" id="1.10.8.60:FF:000002">
    <property type="entry name" value="ATP-dependent Clp protease ATP-binding subunit ClpX"/>
    <property type="match status" value="1"/>
</dbReference>
<dbReference type="FunFam" id="3.40.50.300:FF:000005">
    <property type="entry name" value="ATP-dependent Clp protease ATP-binding subunit ClpX"/>
    <property type="match status" value="1"/>
</dbReference>
<dbReference type="Gene3D" id="1.10.8.60">
    <property type="match status" value="1"/>
</dbReference>
<dbReference type="Gene3D" id="6.20.220.10">
    <property type="entry name" value="ClpX chaperone, C4-type zinc finger domain"/>
    <property type="match status" value="1"/>
</dbReference>
<dbReference type="Gene3D" id="3.40.50.300">
    <property type="entry name" value="P-loop containing nucleotide triphosphate hydrolases"/>
    <property type="match status" value="1"/>
</dbReference>
<dbReference type="HAMAP" id="MF_00175">
    <property type="entry name" value="ClpX"/>
    <property type="match status" value="1"/>
</dbReference>
<dbReference type="InterPro" id="IPR003593">
    <property type="entry name" value="AAA+_ATPase"/>
</dbReference>
<dbReference type="InterPro" id="IPR050052">
    <property type="entry name" value="ATP-dep_Clp_protease_ClpX"/>
</dbReference>
<dbReference type="InterPro" id="IPR003959">
    <property type="entry name" value="ATPase_AAA_core"/>
</dbReference>
<dbReference type="InterPro" id="IPR019489">
    <property type="entry name" value="Clp_ATPase_C"/>
</dbReference>
<dbReference type="InterPro" id="IPR004487">
    <property type="entry name" value="Clp_protease_ATP-bd_su_ClpX"/>
</dbReference>
<dbReference type="InterPro" id="IPR046425">
    <property type="entry name" value="ClpX_bact"/>
</dbReference>
<dbReference type="InterPro" id="IPR027417">
    <property type="entry name" value="P-loop_NTPase"/>
</dbReference>
<dbReference type="InterPro" id="IPR010603">
    <property type="entry name" value="Znf_CppX_C4"/>
</dbReference>
<dbReference type="InterPro" id="IPR038366">
    <property type="entry name" value="Znf_CppX_C4_sf"/>
</dbReference>
<dbReference type="NCBIfam" id="TIGR00382">
    <property type="entry name" value="clpX"/>
    <property type="match status" value="1"/>
</dbReference>
<dbReference type="NCBIfam" id="NF003745">
    <property type="entry name" value="PRK05342.1"/>
    <property type="match status" value="1"/>
</dbReference>
<dbReference type="PANTHER" id="PTHR48102:SF7">
    <property type="entry name" value="ATP-DEPENDENT CLP PROTEASE ATP-BINDING SUBUNIT CLPX-LIKE, MITOCHONDRIAL"/>
    <property type="match status" value="1"/>
</dbReference>
<dbReference type="PANTHER" id="PTHR48102">
    <property type="entry name" value="ATP-DEPENDENT CLP PROTEASE ATP-BINDING SUBUNIT CLPX-LIKE, MITOCHONDRIAL-RELATED"/>
    <property type="match status" value="1"/>
</dbReference>
<dbReference type="Pfam" id="PF07724">
    <property type="entry name" value="AAA_2"/>
    <property type="match status" value="1"/>
</dbReference>
<dbReference type="Pfam" id="PF10431">
    <property type="entry name" value="ClpB_D2-small"/>
    <property type="match status" value="1"/>
</dbReference>
<dbReference type="Pfam" id="PF06689">
    <property type="entry name" value="zf-C4_ClpX"/>
    <property type="match status" value="1"/>
</dbReference>
<dbReference type="SMART" id="SM00382">
    <property type="entry name" value="AAA"/>
    <property type="match status" value="1"/>
</dbReference>
<dbReference type="SMART" id="SM01086">
    <property type="entry name" value="ClpB_D2-small"/>
    <property type="match status" value="1"/>
</dbReference>
<dbReference type="SMART" id="SM00994">
    <property type="entry name" value="zf-C4_ClpX"/>
    <property type="match status" value="1"/>
</dbReference>
<dbReference type="SUPFAM" id="SSF57716">
    <property type="entry name" value="Glucocorticoid receptor-like (DNA-binding domain)"/>
    <property type="match status" value="1"/>
</dbReference>
<dbReference type="SUPFAM" id="SSF52540">
    <property type="entry name" value="P-loop containing nucleoside triphosphate hydrolases"/>
    <property type="match status" value="1"/>
</dbReference>
<dbReference type="PROSITE" id="PS51902">
    <property type="entry name" value="CLPX_ZB"/>
    <property type="match status" value="1"/>
</dbReference>
<name>CLPX_SYNS3</name>
<sequence>MAKFDAHLKCSFCGKSQEQVRKLIAGPGVYICDECIDLCNEILDEELIDAQGNPRHGAEPSKKTAAGGTRKTSKPAPTLATIPKPQEIKGFLDEQVVGQEAAKKVMSVAVYNHYKRLAWQGDGQGEAAQTATRLHKSNILLIGPTGCGKTLLAQTLAEMLDVPFAVADATTLTEAGYVGEDVENILLRLLQKADMDVEQAQRGIIYIDEIDKIARKSENPSITRDVSGEGVQQALLKMLEGTVANVPPQGGRKHPYQDCIQIDTSQILFICGGAFVGLDDVVQKRMGRNAIGFVPNDGRGRNRATRDIQAAQVLRHLEPDDLVKYGLIPEFIGRMPVSAVLEPLDEHALESILTEPRDALVKQFSTLLSMDNVQLDFEAQAVEAIAKEAHRRKTGARALRGIVEELMLDLMYELPSDQNVTAFTITKAMVEEHTGGKVLPLPGTKQHKESA</sequence>